<organism>
    <name type="scientific">Shewanella sp. (strain W3-18-1)</name>
    <dbReference type="NCBI Taxonomy" id="351745"/>
    <lineage>
        <taxon>Bacteria</taxon>
        <taxon>Pseudomonadati</taxon>
        <taxon>Pseudomonadota</taxon>
        <taxon>Gammaproteobacteria</taxon>
        <taxon>Alteromonadales</taxon>
        <taxon>Shewanellaceae</taxon>
        <taxon>Shewanella</taxon>
    </lineage>
</organism>
<gene>
    <name evidence="1" type="primary">priB</name>
    <name type="ordered locus">Sputw3181_3421</name>
</gene>
<feature type="chain" id="PRO_1000083298" description="Replication restart protein PriB">
    <location>
        <begin position="1"/>
        <end position="101"/>
    </location>
</feature>
<feature type="domain" description="SSB" evidence="1">
    <location>
        <begin position="1"/>
        <end position="101"/>
    </location>
</feature>
<sequence>MTTNSLVLSGTITRSRRFKSPAGIAHSVIMLEHKSQRYEADMLRNVYVQIQVILSGPRFESVADNLKAGVEVQVQGFMTLQQGRNGQNRLVIHAENVELKT</sequence>
<protein>
    <recommendedName>
        <fullName evidence="1">Replication restart protein PriB</fullName>
    </recommendedName>
</protein>
<dbReference type="EMBL" id="CP000503">
    <property type="protein sequence ID" value="ABM26233.1"/>
    <property type="molecule type" value="Genomic_DNA"/>
</dbReference>
<dbReference type="RefSeq" id="WP_011790675.1">
    <property type="nucleotide sequence ID" value="NC_008750.1"/>
</dbReference>
<dbReference type="SMR" id="A1RNI8"/>
<dbReference type="GeneID" id="67442212"/>
<dbReference type="KEGG" id="shw:Sputw3181_3421"/>
<dbReference type="HOGENOM" id="CLU_166075_0_0_6"/>
<dbReference type="Proteomes" id="UP000002597">
    <property type="component" value="Chromosome"/>
</dbReference>
<dbReference type="GO" id="GO:1990077">
    <property type="term" value="C:primosome complex"/>
    <property type="evidence" value="ECO:0007669"/>
    <property type="project" value="UniProtKB-KW"/>
</dbReference>
<dbReference type="GO" id="GO:0003697">
    <property type="term" value="F:single-stranded DNA binding"/>
    <property type="evidence" value="ECO:0007669"/>
    <property type="project" value="UniProtKB-UniRule"/>
</dbReference>
<dbReference type="GO" id="GO:0006269">
    <property type="term" value="P:DNA replication, synthesis of primer"/>
    <property type="evidence" value="ECO:0007669"/>
    <property type="project" value="UniProtKB-KW"/>
</dbReference>
<dbReference type="Gene3D" id="2.40.50.140">
    <property type="entry name" value="Nucleic acid-binding proteins"/>
    <property type="match status" value="1"/>
</dbReference>
<dbReference type="HAMAP" id="MF_00720">
    <property type="entry name" value="PriB"/>
    <property type="match status" value="1"/>
</dbReference>
<dbReference type="InterPro" id="IPR012340">
    <property type="entry name" value="NA-bd_OB-fold"/>
</dbReference>
<dbReference type="InterPro" id="IPR000424">
    <property type="entry name" value="Primosome_PriB/ssb"/>
</dbReference>
<dbReference type="InterPro" id="IPR023646">
    <property type="entry name" value="Prisomal_replication_PriB"/>
</dbReference>
<dbReference type="NCBIfam" id="TIGR04418">
    <property type="entry name" value="PriB_gamma"/>
    <property type="match status" value="1"/>
</dbReference>
<dbReference type="Pfam" id="PF22657">
    <property type="entry name" value="SSB_1"/>
    <property type="match status" value="1"/>
</dbReference>
<dbReference type="PIRSF" id="PIRSF003135">
    <property type="entry name" value="Primosomal_n"/>
    <property type="match status" value="1"/>
</dbReference>
<dbReference type="SUPFAM" id="SSF50249">
    <property type="entry name" value="Nucleic acid-binding proteins"/>
    <property type="match status" value="1"/>
</dbReference>
<dbReference type="PROSITE" id="PS50935">
    <property type="entry name" value="SSB"/>
    <property type="match status" value="1"/>
</dbReference>
<keyword id="KW-0235">DNA replication</keyword>
<keyword id="KW-0238">DNA-binding</keyword>
<keyword id="KW-0639">Primosome</keyword>
<proteinExistence type="inferred from homology"/>
<reference key="1">
    <citation type="submission" date="2006-12" db="EMBL/GenBank/DDBJ databases">
        <title>Complete sequence of Shewanella sp. W3-18-1.</title>
        <authorList>
            <consortium name="US DOE Joint Genome Institute"/>
            <person name="Copeland A."/>
            <person name="Lucas S."/>
            <person name="Lapidus A."/>
            <person name="Barry K."/>
            <person name="Detter J.C."/>
            <person name="Glavina del Rio T."/>
            <person name="Hammon N."/>
            <person name="Israni S."/>
            <person name="Dalin E."/>
            <person name="Tice H."/>
            <person name="Pitluck S."/>
            <person name="Chain P."/>
            <person name="Malfatti S."/>
            <person name="Shin M."/>
            <person name="Vergez L."/>
            <person name="Schmutz J."/>
            <person name="Larimer F."/>
            <person name="Land M."/>
            <person name="Hauser L."/>
            <person name="Kyrpides N."/>
            <person name="Lykidis A."/>
            <person name="Tiedje J."/>
            <person name="Richardson P."/>
        </authorList>
    </citation>
    <scope>NUCLEOTIDE SEQUENCE [LARGE SCALE GENOMIC DNA]</scope>
    <source>
        <strain>W3-18-1</strain>
    </source>
</reference>
<comment type="function">
    <text evidence="1">Involved in the restart of stalled replication forks, which reloads the replicative helicase on sites other than the origin of replication; the PriA-PriB pathway is the major replication restart pathway. During primosome assembly it facilitates complex formation between PriA and DnaT on DNA; stabilizes PriA on DNA. Stimulates the DNA unwinding activity of PriA helicase.</text>
</comment>
<comment type="subunit">
    <text evidence="1">Homodimer. Interacts with PriA and DnaT. Component of the replication restart primosome. Primosome assembly occurs via a 'hand-off' mechanism. PriA binds to replication forks, subsequently PriB then DnaT bind; DnaT then displaces ssDNA to generate the helicase loading substrate.</text>
</comment>
<comment type="similarity">
    <text evidence="1">Belongs to the PriB family.</text>
</comment>
<name>PRIB_SHESW</name>
<evidence type="ECO:0000255" key="1">
    <source>
        <dbReference type="HAMAP-Rule" id="MF_00720"/>
    </source>
</evidence>
<accession>A1RNI8</accession>